<sequence length="378" mass="42438">MGTRLEATEQSNHRTQRNDIQLENAKAAGKMGISVDLEAKYAKLGLNLGAITFGEKDRKKMKNSHLRKQENANISLAVCALLNSGGGAIKVKIENENYSLTRDGLGLDLEASLCKCLPFVQWHLDFTESEGYIYIYVKSWSQEIFGLPIGTLRTNLYVRSMSSSVQVSAAAALEFLQDLEETGGRPCVRPELPASIAFPEVEGEWHLEDLAAALFNRTEFQYEETFPFTRSRYVEVTLLSAKRLRKRIKELLPQTVSAFANTDGGFLFIGLDGKTQQIIGFEAEKSDLVLLESEIEKHIRQLPVTHFCEEKEKIKYTCKFIEVHKSGAVCAYVCALRVERFCCAVFAAEPESWHVEGGCVKRFTTEEWVKLQMNAPSG</sequence>
<evidence type="ECO:0000269" key="1">
    <source>
    </source>
</evidence>
<evidence type="ECO:0000269" key="2">
    <source>
    </source>
</evidence>
<evidence type="ECO:0000269" key="3">
    <source>
    </source>
</evidence>
<evidence type="ECO:0000269" key="4">
    <source>
    </source>
</evidence>
<evidence type="ECO:0000269" key="5">
    <source>
    </source>
</evidence>
<evidence type="ECO:0000269" key="6">
    <source>
    </source>
</evidence>
<evidence type="ECO:0000303" key="7">
    <source>
    </source>
</evidence>
<evidence type="ECO:0000305" key="8"/>
<evidence type="ECO:0000312" key="9">
    <source>
        <dbReference type="EMBL" id="SDA08563.1"/>
    </source>
</evidence>
<evidence type="ECO:0000312" key="10">
    <source>
        <dbReference type="EMBL" id="SDA08583.1"/>
    </source>
</evidence>
<evidence type="ECO:0000312" key="11">
    <source>
        <dbReference type="MGI" id="MGI:1313258"/>
    </source>
</evidence>
<reference key="1">
    <citation type="journal article" date="1998" name="Immunity">
        <title>Schlafen, a new family of growth regulatory genes that affect thymocyte development.</title>
        <authorList>
            <person name="Schwarz D.A."/>
            <person name="Katayama C.D."/>
            <person name="Hedrick S.M."/>
        </authorList>
    </citation>
    <scope>NUCLEOTIDE SEQUENCE [MRNA]</scope>
    <scope>TISSUE SPECIFICITY</scope>
</reference>
<reference key="2">
    <citation type="journal article" date="2018" name="Nat. Genet.">
        <title>Sixteen diverse laboratory mouse reference genomes define strain-specific haplotypes and novel functional loci.</title>
        <authorList>
            <person name="Lilue J."/>
            <person name="Doran A.G."/>
            <person name="Fiddes I.T."/>
            <person name="Abrudan M."/>
            <person name="Armstrong J."/>
            <person name="Bennett R."/>
            <person name="Chow W."/>
            <person name="Collins J."/>
            <person name="Collins S."/>
            <person name="Czechanski A."/>
            <person name="Danecek P."/>
            <person name="Diekhans M."/>
            <person name="Dolle D.D."/>
            <person name="Dunn M."/>
            <person name="Durbin R."/>
            <person name="Earl D."/>
            <person name="Ferguson-Smith A."/>
            <person name="Flicek P."/>
            <person name="Flint J."/>
            <person name="Frankish A."/>
            <person name="Fu B."/>
            <person name="Gerstein M."/>
            <person name="Gilbert J."/>
            <person name="Goodstadt L."/>
            <person name="Harrow J."/>
            <person name="Howe K."/>
            <person name="Ibarra-Soria X."/>
            <person name="Kolmogorov M."/>
            <person name="Lelliott C.J."/>
            <person name="Logan D.W."/>
            <person name="Loveland J."/>
            <person name="Mathews C.E."/>
            <person name="Mott R."/>
            <person name="Muir P."/>
            <person name="Nachtweide S."/>
            <person name="Navarro F.C.P."/>
            <person name="Odom D.T."/>
            <person name="Park N."/>
            <person name="Pelan S."/>
            <person name="Pham S.K."/>
            <person name="Quail M."/>
            <person name="Reinholdt L."/>
            <person name="Romoth L."/>
            <person name="Shirley L."/>
            <person name="Sisu C."/>
            <person name="Sjoberg-Herrera M."/>
            <person name="Stanke M."/>
            <person name="Steward C."/>
            <person name="Thomas M."/>
            <person name="Threadgold G."/>
            <person name="Thybert D."/>
            <person name="Torrance J."/>
            <person name="Wong K."/>
            <person name="Wood J."/>
            <person name="Yalcin B."/>
            <person name="Yang F."/>
            <person name="Adams D.J."/>
            <person name="Paten B."/>
            <person name="Keane T.M."/>
        </authorList>
    </citation>
    <scope>NUCLEOTIDE SEQUENCE [GENOMIC DNA]</scope>
    <source>
        <strain evidence="9">CAST/EiJ</strain>
        <strain evidence="10">PWK/PhJ</strain>
    </source>
</reference>
<reference key="3">
    <citation type="journal article" date="2009" name="PLoS Biol.">
        <title>Lineage-specific biology revealed by a finished genome assembly of the mouse.</title>
        <authorList>
            <person name="Church D.M."/>
            <person name="Goodstadt L."/>
            <person name="Hillier L.W."/>
            <person name="Zody M.C."/>
            <person name="Goldstein S."/>
            <person name="She X."/>
            <person name="Bult C.J."/>
            <person name="Agarwala R."/>
            <person name="Cherry J.L."/>
            <person name="DiCuccio M."/>
            <person name="Hlavina W."/>
            <person name="Kapustin Y."/>
            <person name="Meric P."/>
            <person name="Maglott D."/>
            <person name="Birtle Z."/>
            <person name="Marques A.C."/>
            <person name="Graves T."/>
            <person name="Zhou S."/>
            <person name="Teague B."/>
            <person name="Potamousis K."/>
            <person name="Churas C."/>
            <person name="Place M."/>
            <person name="Herschleb J."/>
            <person name="Runnheim R."/>
            <person name="Forrest D."/>
            <person name="Amos-Landgraf J."/>
            <person name="Schwartz D.C."/>
            <person name="Cheng Z."/>
            <person name="Lindblad-Toh K."/>
            <person name="Eichler E.E."/>
            <person name="Ponting C.P."/>
        </authorList>
    </citation>
    <scope>NUCLEOTIDE SEQUENCE [LARGE SCALE GENOMIC DNA]</scope>
    <source>
        <strain>C57BL/6J</strain>
    </source>
</reference>
<reference key="4">
    <citation type="journal article" date="2004" name="Genome Res.">
        <title>The status, quality, and expansion of the NIH full-length cDNA project: the Mammalian Gene Collection (MGC).</title>
        <authorList>
            <consortium name="The MGC Project Team"/>
        </authorList>
    </citation>
    <scope>NUCLEOTIDE SEQUENCE [LARGE SCALE MRNA]</scope>
    <source>
        <tissue>Lung</tissue>
    </source>
</reference>
<reference key="5">
    <citation type="journal article" date="2009" name="J. Biol. Chem.">
        <title>Role of Schlafen 2 (SLFN2) in the generation of interferon alpha-induced growth inhibitory responses.</title>
        <authorList>
            <person name="Katsoulidis E."/>
            <person name="Carayol N."/>
            <person name="Woodard J."/>
            <person name="Konieczna I."/>
            <person name="Majchrzak-Kita B."/>
            <person name="Jordan A."/>
            <person name="Sassano A."/>
            <person name="Eklund E.A."/>
            <person name="Fish E.N."/>
            <person name="Platanias L.C."/>
        </authorList>
    </citation>
    <scope>SUBCELLULAR LOCATION</scope>
    <scope>INDUCTION</scope>
</reference>
<reference key="6">
    <citation type="journal article" date="2010" name="Nat. Immunol.">
        <title>An Slfn2 mutation causes lymphoid and myeloid immunodeficiency due to loss of immune cell quiescence.</title>
        <authorList>
            <person name="Berger M."/>
            <person name="Krebs P."/>
            <person name="Crozat K."/>
            <person name="Li X."/>
            <person name="Croker B.A."/>
            <person name="Siggs O.M."/>
            <person name="Popkin D."/>
            <person name="Du X."/>
            <person name="Lawson B.R."/>
            <person name="Theofilopoulos A.N."/>
            <person name="Xia Y."/>
            <person name="Khovananth K."/>
            <person name="Moresco E.M."/>
            <person name="Satoh T."/>
            <person name="Takeuchi O."/>
            <person name="Akira S."/>
            <person name="Beutler B."/>
        </authorList>
    </citation>
    <scope>FUNCTION</scope>
    <scope>MUTAGENESIS OF ILE-278</scope>
</reference>
<reference key="7">
    <citation type="journal article" date="2016" name="Oncotarget">
        <title>Schlafen2 mutation unravels a role for chronic ER stress in the loss of T cell quiescence.</title>
        <authorList>
            <person name="Omar I."/>
            <person name="Lapenna A."/>
            <person name="Cohen-Daniel L."/>
            <person name="Tirosh B."/>
            <person name="Berger M."/>
        </authorList>
    </citation>
    <scope>MUTAGENESIS OF ILE-278</scope>
</reference>
<reference key="8">
    <citation type="journal article" date="2017" name="Immunology">
        <title>Slfn2 mutation-induced loss of T-cell quiescence leads to elevated de novo sterol synthesis.</title>
        <authorList>
            <person name="Omar I."/>
            <person name="Rom O."/>
            <person name="Aviram M."/>
            <person name="Cohen-Daniel L."/>
            <person name="Gebre A.K."/>
            <person name="Parks J.S."/>
            <person name="Berger M."/>
        </authorList>
    </citation>
    <scope>MUTAGENESIS OF ILE-278</scope>
</reference>
<reference key="9">
    <citation type="journal article" date="2021" name="Science">
        <title>SLFN2 protection of tRNAs from stress-induced cleavage is essential for T cell-mediated immunity.</title>
        <authorList>
            <person name="Yue T."/>
            <person name="Zhan X."/>
            <person name="Zhang D."/>
            <person name="Jain R."/>
            <person name="Wang K.W."/>
            <person name="Choi J.H."/>
            <person name="Misawa T."/>
            <person name="Su L."/>
            <person name="Quan J."/>
            <person name="Hildebrand S."/>
            <person name="Xu D."/>
            <person name="Li X."/>
            <person name="Turer E."/>
            <person name="Sun L."/>
            <person name="Moresco E.M.Y."/>
            <person name="Beutler B."/>
        </authorList>
    </citation>
    <scope>FUNCTION</scope>
    <scope>DISRUPTION PHENOTYPE</scope>
    <scope>MUTAGENESIS OF 67-ARG-LYS-68 AND 242-LYS--LYS-249</scope>
</reference>
<comment type="function">
    <text evidence="2 5">tRNA-binding protein involved in T-cell mediated immunity (PubMed:33986151). Plays a key role during the metabolic reprograming phase of activated T-cell, when T-cells produce reactive oxygen species (ROS): acts by binding tRNAs and protecting them from cleavage by the oxidative stress-activated ribonuclease angiogenin (ANG) (PubMed:33986151). Also required for T-cell quiescence maintenance (PubMed:20190759).</text>
</comment>
<comment type="subcellular location">
    <subcellularLocation>
        <location evidence="1">Cytoplasm</location>
    </subcellularLocation>
</comment>
<comment type="tissue specificity">
    <text evidence="6">Mainly expressed in the thymus, lymph node and spleen.</text>
</comment>
<comment type="induction">
    <text evidence="1">Upon interferon-alpha (IFN-alpha) treatment.</text>
</comment>
<comment type="disruption phenotype">
    <text evidence="5">Conditional deletion in T-cells leads to impaired T cell-mediated immunity (PubMed:33986151). T-cell show an accumulation of tRNA fragments, which inhibit translation and promote stress-granule formation (PubMed:33986151).</text>
</comment>
<comment type="similarity">
    <text evidence="8">Belongs to the Schlafen family.</text>
</comment>
<gene>
    <name evidence="7 11" type="primary">Slfn2</name>
</gene>
<proteinExistence type="evidence at protein level"/>
<protein>
    <recommendedName>
        <fullName evidence="8">Schlafen family member 2</fullName>
        <shortName evidence="7">Schlafen-2</shortName>
    </recommendedName>
</protein>
<organism>
    <name type="scientific">Mus musculus</name>
    <name type="common">Mouse</name>
    <dbReference type="NCBI Taxonomy" id="10090"/>
    <lineage>
        <taxon>Eukaryota</taxon>
        <taxon>Metazoa</taxon>
        <taxon>Chordata</taxon>
        <taxon>Craniata</taxon>
        <taxon>Vertebrata</taxon>
        <taxon>Euteleostomi</taxon>
        <taxon>Mammalia</taxon>
        <taxon>Eutheria</taxon>
        <taxon>Euarchontoglires</taxon>
        <taxon>Glires</taxon>
        <taxon>Rodentia</taxon>
        <taxon>Myomorpha</taxon>
        <taxon>Muroidea</taxon>
        <taxon>Muridae</taxon>
        <taxon>Murinae</taxon>
        <taxon>Mus</taxon>
        <taxon>Mus</taxon>
    </lineage>
</organism>
<name>SLFN2_MOUSE</name>
<accession>Q9Z0I6</accession>
<keyword id="KW-1064">Adaptive immunity</keyword>
<keyword id="KW-0963">Cytoplasm</keyword>
<keyword id="KW-0391">Immunity</keyword>
<keyword id="KW-1185">Reference proteome</keyword>
<keyword id="KW-0694">RNA-binding</keyword>
<keyword id="KW-0820">tRNA-binding</keyword>
<dbReference type="EMBL" id="AF099973">
    <property type="protein sequence ID" value="AAC83826.1"/>
    <property type="molecule type" value="mRNA"/>
</dbReference>
<dbReference type="EMBL" id="LT629148">
    <property type="protein sequence ID" value="SDA08563.1"/>
    <property type="molecule type" value="Genomic_DNA"/>
</dbReference>
<dbReference type="EMBL" id="LT629151">
    <property type="protein sequence ID" value="SDA08583.1"/>
    <property type="molecule type" value="Genomic_DNA"/>
</dbReference>
<dbReference type="EMBL" id="BC138749">
    <property type="protein sequence ID" value="AAI38750.1"/>
    <property type="molecule type" value="mRNA"/>
</dbReference>
<dbReference type="EMBL" id="BC138750">
    <property type="protein sequence ID" value="AAI38751.1"/>
    <property type="molecule type" value="mRNA"/>
</dbReference>
<dbReference type="CCDS" id="CCDS25156.1"/>
<dbReference type="RefSeq" id="NP_035538.1">
    <property type="nucleotide sequence ID" value="NM_011408.1"/>
</dbReference>
<dbReference type="SMR" id="Q9Z0I6"/>
<dbReference type="FunCoup" id="Q9Z0I6">
    <property type="interactions" value="40"/>
</dbReference>
<dbReference type="STRING" id="10090.ENSMUSP00000035562"/>
<dbReference type="PhosphoSitePlus" id="Q9Z0I6"/>
<dbReference type="PaxDb" id="10090-ENSMUSP00000035562"/>
<dbReference type="PeptideAtlas" id="Q9Z0I6"/>
<dbReference type="ProteomicsDB" id="342806"/>
<dbReference type="DNASU" id="20556"/>
<dbReference type="Ensembl" id="ENSMUST00000038038.8">
    <property type="protein sequence ID" value="ENSMUSP00000035562.8"/>
    <property type="gene ID" value="ENSMUSG00000072620.4"/>
</dbReference>
<dbReference type="GeneID" id="20556"/>
<dbReference type="KEGG" id="mmu:20556"/>
<dbReference type="UCSC" id="uc007kog.1">
    <property type="organism name" value="mouse"/>
</dbReference>
<dbReference type="AGR" id="MGI:1313258"/>
<dbReference type="CTD" id="20556"/>
<dbReference type="MGI" id="MGI:1313258">
    <property type="gene designation" value="Slfn2"/>
</dbReference>
<dbReference type="VEuPathDB" id="HostDB:ENSMUSG00000072620"/>
<dbReference type="eggNOG" id="ENOG502RU3F">
    <property type="taxonomic scope" value="Eukaryota"/>
</dbReference>
<dbReference type="GeneTree" id="ENSGT00410000025651"/>
<dbReference type="HOGENOM" id="CLU_676069_0_0_1"/>
<dbReference type="InParanoid" id="Q9Z0I6"/>
<dbReference type="OMA" id="SIDYCIR"/>
<dbReference type="OrthoDB" id="6052143at2759"/>
<dbReference type="PhylomeDB" id="Q9Z0I6"/>
<dbReference type="TreeFam" id="TF337168"/>
<dbReference type="BioGRID-ORCS" id="20556">
    <property type="hits" value="1 hit in 76 CRISPR screens"/>
</dbReference>
<dbReference type="ChiTaRS" id="Slfn2">
    <property type="organism name" value="mouse"/>
</dbReference>
<dbReference type="PRO" id="PR:Q9Z0I6"/>
<dbReference type="Proteomes" id="UP000000589">
    <property type="component" value="Chromosome 11"/>
</dbReference>
<dbReference type="RNAct" id="Q9Z0I6">
    <property type="molecule type" value="protein"/>
</dbReference>
<dbReference type="Bgee" id="ENSMUSG00000072620">
    <property type="expression patterns" value="Expressed in granulocyte and 53 other cell types or tissues"/>
</dbReference>
<dbReference type="GO" id="GO:0005737">
    <property type="term" value="C:cytoplasm"/>
    <property type="evidence" value="ECO:0000314"/>
    <property type="project" value="UniProtKB"/>
</dbReference>
<dbReference type="GO" id="GO:0000049">
    <property type="term" value="F:tRNA binding"/>
    <property type="evidence" value="ECO:0000314"/>
    <property type="project" value="UniProtKB"/>
</dbReference>
<dbReference type="GO" id="GO:0008285">
    <property type="term" value="P:negative regulation of cell population proliferation"/>
    <property type="evidence" value="ECO:0000314"/>
    <property type="project" value="MGI"/>
</dbReference>
<dbReference type="GO" id="GO:0009617">
    <property type="term" value="P:response to bacterium"/>
    <property type="evidence" value="ECO:0000270"/>
    <property type="project" value="MGI"/>
</dbReference>
<dbReference type="GO" id="GO:0002456">
    <property type="term" value="P:T cell mediated immunity"/>
    <property type="evidence" value="ECO:0000314"/>
    <property type="project" value="UniProtKB"/>
</dbReference>
<dbReference type="GO" id="GO:0042098">
    <property type="term" value="P:T cell proliferation"/>
    <property type="evidence" value="ECO:0000314"/>
    <property type="project" value="UniProtKB"/>
</dbReference>
<dbReference type="GO" id="GO:0002309">
    <property type="term" value="P:T cell proliferation involved in immune response"/>
    <property type="evidence" value="ECO:0000315"/>
    <property type="project" value="UniProtKB"/>
</dbReference>
<dbReference type="GO" id="GO:0036416">
    <property type="term" value="P:tRNA stabilization"/>
    <property type="evidence" value="ECO:0000314"/>
    <property type="project" value="UniProtKB"/>
</dbReference>
<dbReference type="FunFam" id="3.30.950.30:FF:000001">
    <property type="entry name" value="Schlafen family member 14"/>
    <property type="match status" value="1"/>
</dbReference>
<dbReference type="Gene3D" id="3.30.950.30">
    <property type="entry name" value="Schlafen, AAA domain"/>
    <property type="match status" value="1"/>
</dbReference>
<dbReference type="InterPro" id="IPR031450">
    <property type="entry name" value="Poxin-SLFN/SLFN_N"/>
</dbReference>
<dbReference type="InterPro" id="IPR029684">
    <property type="entry name" value="Schlafen"/>
</dbReference>
<dbReference type="InterPro" id="IPR007421">
    <property type="entry name" value="Schlafen_AlbA_2_dom"/>
</dbReference>
<dbReference type="InterPro" id="IPR038461">
    <property type="entry name" value="Schlafen_AlbA_2_dom_sf"/>
</dbReference>
<dbReference type="PANTHER" id="PTHR12155:SF2">
    <property type="entry name" value="RIBONUCLEASE SLFN12"/>
    <property type="match status" value="1"/>
</dbReference>
<dbReference type="PANTHER" id="PTHR12155">
    <property type="entry name" value="SCHLAFEN"/>
    <property type="match status" value="1"/>
</dbReference>
<dbReference type="Pfam" id="PF17057">
    <property type="entry name" value="B3R"/>
    <property type="match status" value="1"/>
</dbReference>
<dbReference type="Pfam" id="PF04326">
    <property type="entry name" value="SLFN_AlbA_2"/>
    <property type="match status" value="1"/>
</dbReference>
<feature type="chain" id="PRO_0000457109" description="Schlafen family member 2">
    <location>
        <begin position="1"/>
        <end position="378"/>
    </location>
</feature>
<feature type="mutagenesis site" description="Abolished tRNA-binding." evidence="5">
    <original>RK</original>
    <variation>AA</variation>
    <location>
        <begin position="67"/>
        <end position="68"/>
    </location>
</feature>
<feature type="mutagenesis site" description="Abolished tRNA-binding." evidence="5">
    <original>KRLRKRIK</original>
    <variation>ARLRKRIA</variation>
    <location>
        <begin position="242"/>
        <end position="249"/>
    </location>
</feature>
<feature type="mutagenesis site" description="In elektra mutation; impaired T-cell quiescence. Mice show elevated susceptibility to bacterial and viral infections and to diminished numbers of T-cells that fail to proliferate in response to infection and diverse proliferative stimuli. T-cells display chronic endoplasmic reticulum (ER) stress under steady state conditions. T-cells also show elevated de novo sterol synthesis." evidence="2 3 4">
    <original>I</original>
    <variation>N</variation>
    <location>
        <position position="278"/>
    </location>
</feature>